<sequence length="273" mass="30824">MRLVILETSDSVGKWAAKYVMKRINDFQPSADRYFVLGLPTGSTPLGMYKELIEFHKQGKVSFQYVKTFNMDEYVGLARDHHESYHYFMWNNFFKHIDIEPKNVHILDGNAADLVAECNKFEDQIREAGGVELFIGGIGPDGHIAFNEPGSSLVSRTRVKTLAQDTLEANARFFDNDMSKVPKQALTVGVGTVMDSKEVMILITGAHKAFALYKAIEEGVNHMWTVSAFQQHANTLMICDEDATLELRVKTVKYFKGILRDLDEGSPLEGYKN</sequence>
<comment type="function">
    <text evidence="3">Catalyzes the reversible conversion of alpha-D-glucosamine 6-phosphate (GlcN-6P) into beta-D-fructose 6-phosphate (Fru-6P) and ammonium ion, a regulatory reaction step in de novo uridine diphosphate-N-acetyl-alpha-D-glucosamine (UDP-GlcNAc) biosynthesis via hexosamine pathway.</text>
</comment>
<comment type="catalytic activity">
    <reaction evidence="3">
        <text>alpha-D-glucosamine 6-phosphate + H2O = beta-D-fructose 6-phosphate + NH4(+)</text>
        <dbReference type="Rhea" id="RHEA:12172"/>
        <dbReference type="ChEBI" id="CHEBI:15377"/>
        <dbReference type="ChEBI" id="CHEBI:28938"/>
        <dbReference type="ChEBI" id="CHEBI:57634"/>
        <dbReference type="ChEBI" id="CHEBI:75989"/>
        <dbReference type="EC" id="3.5.99.6"/>
    </reaction>
</comment>
<comment type="pathway">
    <text evidence="3">Nucleotide-sugar biosynthesis; UDP-N-acetyl-alpha-D-glucosamine biosynthesis; alpha-D-glucosamine 6-phosphate from D-fructose 6-phosphate: step 1/1.</text>
</comment>
<comment type="subunit">
    <text evidence="3">Homohexamer.</text>
</comment>
<comment type="subcellular location">
    <subcellularLocation>
        <location evidence="2">Cytoplasm</location>
    </subcellularLocation>
</comment>
<comment type="similarity">
    <text evidence="5">Belongs to the glucosamine/galactosamine-6-phosphate isomerase family.</text>
</comment>
<reference key="1">
    <citation type="journal article" date="2000" name="Science">
        <title>The genome sequence of Drosophila melanogaster.</title>
        <authorList>
            <person name="Adams M.D."/>
            <person name="Celniker S.E."/>
            <person name="Holt R.A."/>
            <person name="Evans C.A."/>
            <person name="Gocayne J.D."/>
            <person name="Amanatides P.G."/>
            <person name="Scherer S.E."/>
            <person name="Li P.W."/>
            <person name="Hoskins R.A."/>
            <person name="Galle R.F."/>
            <person name="George R.A."/>
            <person name="Lewis S.E."/>
            <person name="Richards S."/>
            <person name="Ashburner M."/>
            <person name="Henderson S.N."/>
            <person name="Sutton G.G."/>
            <person name="Wortman J.R."/>
            <person name="Yandell M.D."/>
            <person name="Zhang Q."/>
            <person name="Chen L.X."/>
            <person name="Brandon R.C."/>
            <person name="Rogers Y.-H.C."/>
            <person name="Blazej R.G."/>
            <person name="Champe M."/>
            <person name="Pfeiffer B.D."/>
            <person name="Wan K.H."/>
            <person name="Doyle C."/>
            <person name="Baxter E.G."/>
            <person name="Helt G."/>
            <person name="Nelson C.R."/>
            <person name="Miklos G.L.G."/>
            <person name="Abril J.F."/>
            <person name="Agbayani A."/>
            <person name="An H.-J."/>
            <person name="Andrews-Pfannkoch C."/>
            <person name="Baldwin D."/>
            <person name="Ballew R.M."/>
            <person name="Basu A."/>
            <person name="Baxendale J."/>
            <person name="Bayraktaroglu L."/>
            <person name="Beasley E.M."/>
            <person name="Beeson K.Y."/>
            <person name="Benos P.V."/>
            <person name="Berman B.P."/>
            <person name="Bhandari D."/>
            <person name="Bolshakov S."/>
            <person name="Borkova D."/>
            <person name="Botchan M.R."/>
            <person name="Bouck J."/>
            <person name="Brokstein P."/>
            <person name="Brottier P."/>
            <person name="Burtis K.C."/>
            <person name="Busam D.A."/>
            <person name="Butler H."/>
            <person name="Cadieu E."/>
            <person name="Center A."/>
            <person name="Chandra I."/>
            <person name="Cherry J.M."/>
            <person name="Cawley S."/>
            <person name="Dahlke C."/>
            <person name="Davenport L.B."/>
            <person name="Davies P."/>
            <person name="de Pablos B."/>
            <person name="Delcher A."/>
            <person name="Deng Z."/>
            <person name="Mays A.D."/>
            <person name="Dew I."/>
            <person name="Dietz S.M."/>
            <person name="Dodson K."/>
            <person name="Doup L.E."/>
            <person name="Downes M."/>
            <person name="Dugan-Rocha S."/>
            <person name="Dunkov B.C."/>
            <person name="Dunn P."/>
            <person name="Durbin K.J."/>
            <person name="Evangelista C.C."/>
            <person name="Ferraz C."/>
            <person name="Ferriera S."/>
            <person name="Fleischmann W."/>
            <person name="Fosler C."/>
            <person name="Gabrielian A.E."/>
            <person name="Garg N.S."/>
            <person name="Gelbart W.M."/>
            <person name="Glasser K."/>
            <person name="Glodek A."/>
            <person name="Gong F."/>
            <person name="Gorrell J.H."/>
            <person name="Gu Z."/>
            <person name="Guan P."/>
            <person name="Harris M."/>
            <person name="Harris N.L."/>
            <person name="Harvey D.A."/>
            <person name="Heiman T.J."/>
            <person name="Hernandez J.R."/>
            <person name="Houck J."/>
            <person name="Hostin D."/>
            <person name="Houston K.A."/>
            <person name="Howland T.J."/>
            <person name="Wei M.-H."/>
            <person name="Ibegwam C."/>
            <person name="Jalali M."/>
            <person name="Kalush F."/>
            <person name="Karpen G.H."/>
            <person name="Ke Z."/>
            <person name="Kennison J.A."/>
            <person name="Ketchum K.A."/>
            <person name="Kimmel B.E."/>
            <person name="Kodira C.D."/>
            <person name="Kraft C.L."/>
            <person name="Kravitz S."/>
            <person name="Kulp D."/>
            <person name="Lai Z."/>
            <person name="Lasko P."/>
            <person name="Lei Y."/>
            <person name="Levitsky A.A."/>
            <person name="Li J.H."/>
            <person name="Li Z."/>
            <person name="Liang Y."/>
            <person name="Lin X."/>
            <person name="Liu X."/>
            <person name="Mattei B."/>
            <person name="McIntosh T.C."/>
            <person name="McLeod M.P."/>
            <person name="McPherson D."/>
            <person name="Merkulov G."/>
            <person name="Milshina N.V."/>
            <person name="Mobarry C."/>
            <person name="Morris J."/>
            <person name="Moshrefi A."/>
            <person name="Mount S.M."/>
            <person name="Moy M."/>
            <person name="Murphy B."/>
            <person name="Murphy L."/>
            <person name="Muzny D.M."/>
            <person name="Nelson D.L."/>
            <person name="Nelson D.R."/>
            <person name="Nelson K.A."/>
            <person name="Nixon K."/>
            <person name="Nusskern D.R."/>
            <person name="Pacleb J.M."/>
            <person name="Palazzolo M."/>
            <person name="Pittman G.S."/>
            <person name="Pan S."/>
            <person name="Pollard J."/>
            <person name="Puri V."/>
            <person name="Reese M.G."/>
            <person name="Reinert K."/>
            <person name="Remington K."/>
            <person name="Saunders R.D.C."/>
            <person name="Scheeler F."/>
            <person name="Shen H."/>
            <person name="Shue B.C."/>
            <person name="Siden-Kiamos I."/>
            <person name="Simpson M."/>
            <person name="Skupski M.P."/>
            <person name="Smith T.J."/>
            <person name="Spier E."/>
            <person name="Spradling A.C."/>
            <person name="Stapleton M."/>
            <person name="Strong R."/>
            <person name="Sun E."/>
            <person name="Svirskas R."/>
            <person name="Tector C."/>
            <person name="Turner R."/>
            <person name="Venter E."/>
            <person name="Wang A.H."/>
            <person name="Wang X."/>
            <person name="Wang Z.-Y."/>
            <person name="Wassarman D.A."/>
            <person name="Weinstock G.M."/>
            <person name="Weissenbach J."/>
            <person name="Williams S.M."/>
            <person name="Woodage T."/>
            <person name="Worley K.C."/>
            <person name="Wu D."/>
            <person name="Yang S."/>
            <person name="Yao Q.A."/>
            <person name="Ye J."/>
            <person name="Yeh R.-F."/>
            <person name="Zaveri J.S."/>
            <person name="Zhan M."/>
            <person name="Zhang G."/>
            <person name="Zhao Q."/>
            <person name="Zheng L."/>
            <person name="Zheng X.H."/>
            <person name="Zhong F.N."/>
            <person name="Zhong W."/>
            <person name="Zhou X."/>
            <person name="Zhu S.C."/>
            <person name="Zhu X."/>
            <person name="Smith H.O."/>
            <person name="Gibbs R.A."/>
            <person name="Myers E.W."/>
            <person name="Rubin G.M."/>
            <person name="Venter J.C."/>
        </authorList>
    </citation>
    <scope>NUCLEOTIDE SEQUENCE [LARGE SCALE GENOMIC DNA]</scope>
    <source>
        <strain>Berkeley</strain>
    </source>
</reference>
<reference key="2">
    <citation type="journal article" date="2002" name="Genome Biol.">
        <title>Annotation of the Drosophila melanogaster euchromatic genome: a systematic review.</title>
        <authorList>
            <person name="Misra S."/>
            <person name="Crosby M.A."/>
            <person name="Mungall C.J."/>
            <person name="Matthews B.B."/>
            <person name="Campbell K.S."/>
            <person name="Hradecky P."/>
            <person name="Huang Y."/>
            <person name="Kaminker J.S."/>
            <person name="Millburn G.H."/>
            <person name="Prochnik S.E."/>
            <person name="Smith C.D."/>
            <person name="Tupy J.L."/>
            <person name="Whitfield E.J."/>
            <person name="Bayraktaroglu L."/>
            <person name="Berman B.P."/>
            <person name="Bettencourt B.R."/>
            <person name="Celniker S.E."/>
            <person name="de Grey A.D.N.J."/>
            <person name="Drysdale R.A."/>
            <person name="Harris N.L."/>
            <person name="Richter J."/>
            <person name="Russo S."/>
            <person name="Schroeder A.J."/>
            <person name="Shu S.Q."/>
            <person name="Stapleton M."/>
            <person name="Yamada C."/>
            <person name="Ashburner M."/>
            <person name="Gelbart W.M."/>
            <person name="Rubin G.M."/>
            <person name="Lewis S.E."/>
        </authorList>
    </citation>
    <scope>GENOME REANNOTATION</scope>
    <source>
        <strain>Berkeley</strain>
    </source>
</reference>
<reference key="3">
    <citation type="journal article" date="2002" name="Genome Biol.">
        <title>A Drosophila full-length cDNA resource.</title>
        <authorList>
            <person name="Stapleton M."/>
            <person name="Carlson J.W."/>
            <person name="Brokstein P."/>
            <person name="Yu C."/>
            <person name="Champe M."/>
            <person name="George R.A."/>
            <person name="Guarin H."/>
            <person name="Kronmiller B."/>
            <person name="Pacleb J.M."/>
            <person name="Park S."/>
            <person name="Wan K.H."/>
            <person name="Rubin G.M."/>
            <person name="Celniker S.E."/>
        </authorList>
    </citation>
    <scope>NUCLEOTIDE SEQUENCE [LARGE SCALE MRNA]</scope>
    <source>
        <strain>Berkeley</strain>
        <tissue>Larva</tissue>
        <tissue>Pupae</tissue>
    </source>
</reference>
<reference key="4">
    <citation type="journal article" date="2000" name="Genomics">
        <title>Evolution, structure, and expression of GNPI/Oscillin orthologous genes.</title>
        <authorList>
            <person name="Nakamura Y."/>
            <person name="Miura K."/>
            <person name="Fujino Y."/>
            <person name="Iwao H."/>
            <person name="Ogita S."/>
            <person name="Yamanaka S."/>
        </authorList>
    </citation>
    <scope>IDENTIFICATION</scope>
</reference>
<evidence type="ECO:0000250" key="1"/>
<evidence type="ECO:0000250" key="2">
    <source>
        <dbReference type="UniProtKB" id="O88958"/>
    </source>
</evidence>
<evidence type="ECO:0000250" key="3">
    <source>
        <dbReference type="UniProtKB" id="P46926"/>
    </source>
</evidence>
<evidence type="ECO:0000303" key="4">
    <source>
    </source>
</evidence>
<evidence type="ECO:0000305" key="5"/>
<evidence type="ECO:0000312" key="6">
    <source>
        <dbReference type="FlyBase" id="FBgn0031717"/>
    </source>
</evidence>
<evidence type="ECO:0000312" key="7">
    <source>
        <dbReference type="Proteomes" id="UP000000803"/>
    </source>
</evidence>
<name>GNPI_DROME</name>
<gene>
    <name evidence="6" type="primary">Gnpda</name>
    <name type="synonym">Gnpda1</name>
    <name evidence="4 6" type="synonym">Oscillin</name>
    <name evidence="6" type="ORF">CG6957</name>
</gene>
<protein>
    <recommendedName>
        <fullName evidence="6">Glucosamine-6-phosphate deaminase</fullName>
        <shortName>GlcN6P deaminase</shortName>
        <ecNumber evidence="3">3.5.99.6</ecNumber>
    </recommendedName>
    <alternativeName>
        <fullName evidence="4">Glucosamine-6-phosphate isomerase</fullName>
        <shortName evidence="4">GNPI</shortName>
    </alternativeName>
    <alternativeName>
        <fullName evidence="4">Protein oscillin</fullName>
    </alternativeName>
</protein>
<keyword id="KW-0119">Carbohydrate metabolism</keyword>
<keyword id="KW-0963">Cytoplasm</keyword>
<keyword id="KW-0378">Hydrolase</keyword>
<keyword id="KW-1185">Reference proteome</keyword>
<dbReference type="EC" id="3.5.99.6" evidence="3"/>
<dbReference type="EMBL" id="AE014134">
    <property type="protein sequence ID" value="AAF52263.1"/>
    <property type="molecule type" value="Genomic_DNA"/>
</dbReference>
<dbReference type="EMBL" id="AE014134">
    <property type="protein sequence ID" value="AAN10546.1"/>
    <property type="molecule type" value="Genomic_DNA"/>
</dbReference>
<dbReference type="EMBL" id="AE014134">
    <property type="protein sequence ID" value="AFH03568.1"/>
    <property type="molecule type" value="Genomic_DNA"/>
</dbReference>
<dbReference type="EMBL" id="AE014134">
    <property type="protein sequence ID" value="AFH03571.1"/>
    <property type="molecule type" value="Genomic_DNA"/>
</dbReference>
<dbReference type="EMBL" id="AE014134">
    <property type="protein sequence ID" value="AGB92637.1"/>
    <property type="molecule type" value="Genomic_DNA"/>
</dbReference>
<dbReference type="EMBL" id="AY122220">
    <property type="protein sequence ID" value="AAM52732.1"/>
    <property type="molecule type" value="mRNA"/>
</dbReference>
<dbReference type="RefSeq" id="NP_001245894.1">
    <property type="nucleotide sequence ID" value="NM_001258965.2"/>
</dbReference>
<dbReference type="RefSeq" id="NP_001245897.1">
    <property type="nucleotide sequence ID" value="NM_001258968.1"/>
</dbReference>
<dbReference type="RefSeq" id="NP_001260101.1">
    <property type="nucleotide sequence ID" value="NM_001273172.1"/>
</dbReference>
<dbReference type="RefSeq" id="NP_608938.1">
    <property type="nucleotide sequence ID" value="NM_135094.2"/>
</dbReference>
<dbReference type="RefSeq" id="NP_723092.1">
    <property type="nucleotide sequence ID" value="NM_164649.2"/>
</dbReference>
<dbReference type="SMR" id="Q9VMP9"/>
<dbReference type="BioGRID" id="59951">
    <property type="interactions" value="7"/>
</dbReference>
<dbReference type="FunCoup" id="Q9VMP9">
    <property type="interactions" value="786"/>
</dbReference>
<dbReference type="IntAct" id="Q9VMP9">
    <property type="interactions" value="4"/>
</dbReference>
<dbReference type="STRING" id="7227.FBpp0078735"/>
<dbReference type="PaxDb" id="7227-FBpp0297903"/>
<dbReference type="DNASU" id="33783"/>
<dbReference type="EnsemblMetazoa" id="FBtr0079101">
    <property type="protein sequence ID" value="FBpp0078734"/>
    <property type="gene ID" value="FBgn0031717"/>
</dbReference>
<dbReference type="EnsemblMetazoa" id="FBtr0079102">
    <property type="protein sequence ID" value="FBpp0078735"/>
    <property type="gene ID" value="FBgn0031717"/>
</dbReference>
<dbReference type="EnsemblMetazoa" id="FBtr0307060">
    <property type="protein sequence ID" value="FBpp0297903"/>
    <property type="gene ID" value="FBgn0031717"/>
</dbReference>
<dbReference type="EnsemblMetazoa" id="FBtr0307063">
    <property type="protein sequence ID" value="FBpp0297906"/>
    <property type="gene ID" value="FBgn0031717"/>
</dbReference>
<dbReference type="EnsemblMetazoa" id="FBtr0331675">
    <property type="protein sequence ID" value="FBpp0304065"/>
    <property type="gene ID" value="FBgn0031717"/>
</dbReference>
<dbReference type="GeneID" id="33783"/>
<dbReference type="KEGG" id="dme:Dmel_CG6957"/>
<dbReference type="UCSC" id="CG6957-RA">
    <property type="organism name" value="d. melanogaster"/>
</dbReference>
<dbReference type="AGR" id="FB:FBgn0031717"/>
<dbReference type="CTD" id="33783"/>
<dbReference type="FlyBase" id="FBgn0031717">
    <property type="gene designation" value="Gnpda"/>
</dbReference>
<dbReference type="VEuPathDB" id="VectorBase:FBgn0031717"/>
<dbReference type="eggNOG" id="KOG3148">
    <property type="taxonomic scope" value="Eukaryota"/>
</dbReference>
<dbReference type="GeneTree" id="ENSGT00390000014316"/>
<dbReference type="InParanoid" id="Q9VMP9"/>
<dbReference type="OMA" id="HVITQGI"/>
<dbReference type="OrthoDB" id="7663298at2759"/>
<dbReference type="PhylomeDB" id="Q9VMP9"/>
<dbReference type="Reactome" id="R-DME-70171">
    <property type="pathway name" value="Glycolysis"/>
</dbReference>
<dbReference type="UniPathway" id="UPA00113">
    <property type="reaction ID" value="UER00528"/>
</dbReference>
<dbReference type="BioGRID-ORCS" id="33783">
    <property type="hits" value="0 hits in 3 CRISPR screens"/>
</dbReference>
<dbReference type="GenomeRNAi" id="33783"/>
<dbReference type="PRO" id="PR:Q9VMP9"/>
<dbReference type="Proteomes" id="UP000000803">
    <property type="component" value="Chromosome 2L"/>
</dbReference>
<dbReference type="Bgee" id="FBgn0031717">
    <property type="expression patterns" value="Expressed in saliva-secreting gland and 114 other cell types or tissues"/>
</dbReference>
<dbReference type="ExpressionAtlas" id="Q9VMP9">
    <property type="expression patterns" value="baseline and differential"/>
</dbReference>
<dbReference type="GO" id="GO:0005737">
    <property type="term" value="C:cytoplasm"/>
    <property type="evidence" value="ECO:0000250"/>
    <property type="project" value="UniProtKB"/>
</dbReference>
<dbReference type="GO" id="GO:0004342">
    <property type="term" value="F:glucosamine-6-phosphate deaminase activity"/>
    <property type="evidence" value="ECO:0000250"/>
    <property type="project" value="UniProtKB"/>
</dbReference>
<dbReference type="GO" id="GO:0042802">
    <property type="term" value="F:identical protein binding"/>
    <property type="evidence" value="ECO:0000318"/>
    <property type="project" value="GO_Central"/>
</dbReference>
<dbReference type="GO" id="GO:0005975">
    <property type="term" value="P:carbohydrate metabolic process"/>
    <property type="evidence" value="ECO:0007669"/>
    <property type="project" value="InterPro"/>
</dbReference>
<dbReference type="GO" id="GO:0006091">
    <property type="term" value="P:generation of precursor metabolites and energy"/>
    <property type="evidence" value="ECO:0000250"/>
    <property type="project" value="UniProtKB"/>
</dbReference>
<dbReference type="GO" id="GO:0006043">
    <property type="term" value="P:glucosamine catabolic process"/>
    <property type="evidence" value="ECO:0000250"/>
    <property type="project" value="UniProtKB"/>
</dbReference>
<dbReference type="GO" id="GO:0006046">
    <property type="term" value="P:N-acetylglucosamine catabolic process"/>
    <property type="evidence" value="ECO:0000318"/>
    <property type="project" value="GO_Central"/>
</dbReference>
<dbReference type="GO" id="GO:0006044">
    <property type="term" value="P:N-acetylglucosamine metabolic process"/>
    <property type="evidence" value="ECO:0000250"/>
    <property type="project" value="FlyBase"/>
</dbReference>
<dbReference type="GO" id="GO:0019262">
    <property type="term" value="P:N-acetylneuraminate catabolic process"/>
    <property type="evidence" value="ECO:0000318"/>
    <property type="project" value="GO_Central"/>
</dbReference>
<dbReference type="GO" id="GO:0006048">
    <property type="term" value="P:UDP-N-acetylglucosamine biosynthetic process"/>
    <property type="evidence" value="ECO:0000250"/>
    <property type="project" value="FlyBase"/>
</dbReference>
<dbReference type="CDD" id="cd01399">
    <property type="entry name" value="GlcN6P_deaminase"/>
    <property type="match status" value="1"/>
</dbReference>
<dbReference type="FunFam" id="3.40.50.1360:FF:000004">
    <property type="entry name" value="Glucosamine-6-phosphate isomerase"/>
    <property type="match status" value="1"/>
</dbReference>
<dbReference type="Gene3D" id="3.40.50.1360">
    <property type="match status" value="1"/>
</dbReference>
<dbReference type="HAMAP" id="MF_01241">
    <property type="entry name" value="GlcN6P_deamin"/>
    <property type="match status" value="1"/>
</dbReference>
<dbReference type="InterPro" id="IPR006148">
    <property type="entry name" value="Glc/Gal-6P_isomerase"/>
</dbReference>
<dbReference type="InterPro" id="IPR004547">
    <property type="entry name" value="Glucosamine6P_isomerase"/>
</dbReference>
<dbReference type="InterPro" id="IPR018321">
    <property type="entry name" value="Glucosamine6P_isomerase_CS"/>
</dbReference>
<dbReference type="InterPro" id="IPR037171">
    <property type="entry name" value="NagB/RpiA_transferase-like"/>
</dbReference>
<dbReference type="NCBIfam" id="TIGR00502">
    <property type="entry name" value="nagB"/>
    <property type="match status" value="1"/>
</dbReference>
<dbReference type="PANTHER" id="PTHR11280">
    <property type="entry name" value="GLUCOSAMINE-6-PHOSPHATE ISOMERASE"/>
    <property type="match status" value="1"/>
</dbReference>
<dbReference type="PANTHER" id="PTHR11280:SF5">
    <property type="entry name" value="GLUCOSAMINE-6-PHOSPHATE ISOMERASE"/>
    <property type="match status" value="1"/>
</dbReference>
<dbReference type="Pfam" id="PF01182">
    <property type="entry name" value="Glucosamine_iso"/>
    <property type="match status" value="1"/>
</dbReference>
<dbReference type="SUPFAM" id="SSF100950">
    <property type="entry name" value="NagB/RpiA/CoA transferase-like"/>
    <property type="match status" value="1"/>
</dbReference>
<dbReference type="PROSITE" id="PS01161">
    <property type="entry name" value="GLC_GALNAC_ISOMERASE"/>
    <property type="match status" value="1"/>
</dbReference>
<feature type="chain" id="PRO_0000328091" description="Glucosamine-6-phosphate deaminase">
    <location>
        <begin position="1"/>
        <end position="273"/>
    </location>
</feature>
<feature type="active site" description="Proton acceptor; for enolization step" evidence="1">
    <location>
        <position position="72"/>
    </location>
</feature>
<feature type="active site" description="For ring-opening step" evidence="1">
    <location>
        <position position="141"/>
    </location>
</feature>
<feature type="active site" description="Proton acceptor; for ring-opening step" evidence="1">
    <location>
        <position position="143"/>
    </location>
</feature>
<feature type="active site" description="For ring-opening step" evidence="1">
    <location>
        <position position="148"/>
    </location>
</feature>
<organism evidence="7">
    <name type="scientific">Drosophila melanogaster</name>
    <name type="common">Fruit fly</name>
    <dbReference type="NCBI Taxonomy" id="7227"/>
    <lineage>
        <taxon>Eukaryota</taxon>
        <taxon>Metazoa</taxon>
        <taxon>Ecdysozoa</taxon>
        <taxon>Arthropoda</taxon>
        <taxon>Hexapoda</taxon>
        <taxon>Insecta</taxon>
        <taxon>Pterygota</taxon>
        <taxon>Neoptera</taxon>
        <taxon>Endopterygota</taxon>
        <taxon>Diptera</taxon>
        <taxon>Brachycera</taxon>
        <taxon>Muscomorpha</taxon>
        <taxon>Ephydroidea</taxon>
        <taxon>Drosophilidae</taxon>
        <taxon>Drosophila</taxon>
        <taxon>Sophophora</taxon>
    </lineage>
</organism>
<proteinExistence type="evidence at transcript level"/>
<accession>Q9VMP9</accession>
<accession>M9NE92</accession>